<reference key="1">
    <citation type="journal article" date="1979" name="J. Immunol.">
        <title>Structural studies on induced antibodies with defined idiotypic specificities. VII. The complete amino acid sequence of the heavy chain variable region of anti-p-azophenylarsenate antibodies from A/J mice bearing a cross-reactive idiotype.</title>
        <authorList>
            <person name="Capra J.D."/>
            <person name="Nisonoff A."/>
        </authorList>
    </citation>
    <scope>PROTEIN SEQUENCE</scope>
    <source>
        <strain>A/J</strain>
    </source>
</reference>
<comment type="miscellaneous">
    <text>Antibody isolated from ten mice was exclusively of the IgG1 subclass. There was no heterogeneity in the heavy chain V region sequence.</text>
</comment>
<protein>
    <recommendedName>
        <fullName>Ig heavy chain V region</fullName>
    </recommendedName>
    <alternativeName>
        <fullName>Anti-arsonate antibody</fullName>
    </alternativeName>
</protein>
<feature type="chain" id="PRO_0000059867" description="Ig heavy chain V region">
    <location>
        <begin position="1"/>
        <end position="114" status="greater than"/>
    </location>
</feature>
<feature type="domain" description="Ig-like">
    <location>
        <begin position="1"/>
        <end position="106"/>
    </location>
</feature>
<feature type="non-terminal residue">
    <location>
        <position position="114"/>
    </location>
</feature>
<dbReference type="PIR" id="A02022">
    <property type="entry name" value="G1MSAA"/>
</dbReference>
<dbReference type="SMR" id="P01741"/>
<dbReference type="FunCoup" id="P01741">
    <property type="interactions" value="30"/>
</dbReference>
<dbReference type="PeptideAtlas" id="P01741"/>
<dbReference type="InParanoid" id="P01741"/>
<dbReference type="Proteomes" id="UP000000589">
    <property type="component" value="Unplaced"/>
</dbReference>
<dbReference type="RNAct" id="P01741">
    <property type="molecule type" value="protein"/>
</dbReference>
<dbReference type="GO" id="GO:0005576">
    <property type="term" value="C:extracellular region"/>
    <property type="evidence" value="ECO:0007669"/>
    <property type="project" value="UniProtKB-ARBA"/>
</dbReference>
<dbReference type="GO" id="GO:0019814">
    <property type="term" value="C:immunoglobulin complex"/>
    <property type="evidence" value="ECO:0007669"/>
    <property type="project" value="UniProtKB-KW"/>
</dbReference>
<dbReference type="GO" id="GO:0003823">
    <property type="term" value="F:antigen binding"/>
    <property type="evidence" value="ECO:0000318"/>
    <property type="project" value="GO_Central"/>
</dbReference>
<dbReference type="GO" id="GO:0016064">
    <property type="term" value="P:immunoglobulin mediated immune response"/>
    <property type="evidence" value="ECO:0000318"/>
    <property type="project" value="GO_Central"/>
</dbReference>
<dbReference type="FunFam" id="2.60.40.10:FF:000556">
    <property type="entry name" value="Immunoglobulin heavy variable 7-81 (non-functional)"/>
    <property type="match status" value="1"/>
</dbReference>
<dbReference type="Gene3D" id="2.60.40.10">
    <property type="entry name" value="Immunoglobulins"/>
    <property type="match status" value="1"/>
</dbReference>
<dbReference type="InterPro" id="IPR007110">
    <property type="entry name" value="Ig-like_dom"/>
</dbReference>
<dbReference type="InterPro" id="IPR036179">
    <property type="entry name" value="Ig-like_dom_sf"/>
</dbReference>
<dbReference type="InterPro" id="IPR013783">
    <property type="entry name" value="Ig-like_fold"/>
</dbReference>
<dbReference type="InterPro" id="IPR003599">
    <property type="entry name" value="Ig_sub"/>
</dbReference>
<dbReference type="InterPro" id="IPR013106">
    <property type="entry name" value="Ig_V-set"/>
</dbReference>
<dbReference type="InterPro" id="IPR050199">
    <property type="entry name" value="IgHV"/>
</dbReference>
<dbReference type="PANTHER" id="PTHR23266">
    <property type="entry name" value="IMMUNOGLOBULIN HEAVY CHAIN"/>
    <property type="match status" value="1"/>
</dbReference>
<dbReference type="Pfam" id="PF07686">
    <property type="entry name" value="V-set"/>
    <property type="match status" value="1"/>
</dbReference>
<dbReference type="SMART" id="SM00409">
    <property type="entry name" value="IG"/>
    <property type="match status" value="1"/>
</dbReference>
<dbReference type="SMART" id="SM00406">
    <property type="entry name" value="IGv"/>
    <property type="match status" value="1"/>
</dbReference>
<dbReference type="SUPFAM" id="SSF48726">
    <property type="entry name" value="Immunoglobulin"/>
    <property type="match status" value="1"/>
</dbReference>
<dbReference type="PROSITE" id="PS50835">
    <property type="entry name" value="IG_LIKE"/>
    <property type="match status" value="1"/>
</dbReference>
<keyword id="KW-1064">Adaptive immunity</keyword>
<keyword id="KW-0903">Direct protein sequencing</keyword>
<keyword id="KW-0391">Immunity</keyword>
<keyword id="KW-1280">Immunoglobulin</keyword>
<keyword id="KW-1185">Reference proteome</keyword>
<organism>
    <name type="scientific">Mus musculus</name>
    <name type="common">Mouse</name>
    <dbReference type="NCBI Taxonomy" id="10090"/>
    <lineage>
        <taxon>Eukaryota</taxon>
        <taxon>Metazoa</taxon>
        <taxon>Chordata</taxon>
        <taxon>Craniata</taxon>
        <taxon>Vertebrata</taxon>
        <taxon>Euteleostomi</taxon>
        <taxon>Mammalia</taxon>
        <taxon>Eutheria</taxon>
        <taxon>Euarchontoglires</taxon>
        <taxon>Glires</taxon>
        <taxon>Rodentia</taxon>
        <taxon>Myomorpha</taxon>
        <taxon>Muroidea</taxon>
        <taxon>Muridae</taxon>
        <taxon>Murinae</taxon>
        <taxon>Mus</taxon>
        <taxon>Mus</taxon>
    </lineage>
</organism>
<name>HVM00_MOUSE</name>
<sequence>EVQLQQSGAELVKAGSSVKMSCKATGYTFSSYELYWVRQAPGQGLEDLGYISSSSAYPNYAQKFQGRVTITADESTNTAYMELSSLRSEDTAVYFCAVRVISRYFDGWGQGTLV</sequence>
<accession>P01741</accession>
<proteinExistence type="evidence at protein level"/>